<sequence length="569" mass="62636">MEGEERGYWRWSKRDFFPEESFQSFGSYRAALSQTCSRFKNRLVSRSDDENERFELKKQSEHEMKRCLTWWDLVWFGFGSVIGAGIFVLTGQEAHEQAGPAIVLSYVVSGLSAMLSVFCYTEFAVEIPVAGGSFAYLRIELGDFAAFITAGNILLESIVGTAAVARAWTSYFATLLNRSPNALRIKTDLSSGFNLLDPIAVVVIAASATIASISTRKTSLLNWIASAINTLVIFFVIIAGFIHADTSNLTPFLPFGPEGVFRAAAVVYFAYGGFDSIATMAEETKNPSRDIPIGLLGSMSIITVIYCLMALSLSMMQKYTDIDPNAAYSVAFQSVGMKWGKYLVALGALKGMTTVLLVGALGQARYVTHIARTHMIPPIFALVHPKTGTPINANLLVAIPSALIAFFSGLDVLASLLSISTLFIFTMMPIALLVRRYYVRQDTPRVHLIKLITCLLFVVVSSMGTSAYWGMQRKGSWIGYTVTVPFWFLGTLGIVFFVPQQRTPKVWGVPLVPWLPCLSIATNIFLMGSLGAMAFVRFGVCTLAMLLYYFLLGLHATFDMAHQQIVPRT</sequence>
<gene>
    <name type="primary">CAT5</name>
    <name type="ordered locus">At2g34960</name>
    <name type="ORF">F19I3.19</name>
</gene>
<keyword id="KW-0029">Amino-acid transport</keyword>
<keyword id="KW-1003">Cell membrane</keyword>
<keyword id="KW-0472">Membrane</keyword>
<keyword id="KW-1185">Reference proteome</keyword>
<keyword id="KW-0812">Transmembrane</keyword>
<keyword id="KW-1133">Transmembrane helix</keyword>
<keyword id="KW-0813">Transport</keyword>
<comment type="function">
    <text evidence="2">High-affinity permease involved in the transport of the cationic amino acids (e.g. arginine, and, to a lower extent, citrulline and glutamate). Transport mostly basic amino acids, and, to a lower extent neutral and acidic amino acids.</text>
</comment>
<comment type="biophysicochemical properties">
    <kinetics>
        <KM evidence="2">12 uM for arginine</KM>
    </kinetics>
    <phDependence>
        <text evidence="2">Optimal transport of arginine at pH 5.</text>
    </phDependence>
</comment>
<comment type="subcellular location">
    <subcellularLocation>
        <location evidence="2">Cell membrane</location>
        <topology evidence="2">Multi-pass membrane protein</topology>
    </subcellularLocation>
</comment>
<comment type="tissue specificity">
    <text evidence="2">Expressed in roots, stems, flowers, seeds, and leaves. Mostly present in leaf rims and cotyledons of developing seedlings.</text>
</comment>
<comment type="similarity">
    <text evidence="3">Belongs to the amino acid-polyamine-organocation (APC) superfamily. Cationic amino acid transporter (CAT) (TC 2.A.3.3) family.</text>
</comment>
<comment type="sequence caution" evidence="3">
    <conflict type="frameshift">
        <sequence resource="EMBL-CDS" id="AAL91292"/>
    </conflict>
</comment>
<comment type="sequence caution" evidence="3">
    <conflict type="frameshift">
        <sequence resource="EMBL-CDS" id="AAN18189"/>
    </conflict>
</comment>
<evidence type="ECO:0000255" key="1"/>
<evidence type="ECO:0000269" key="2">
    <source>
    </source>
</evidence>
<evidence type="ECO:0000305" key="3"/>
<name>CAAT5_ARATH</name>
<feature type="chain" id="PRO_0000415781" description="Cationic amino acid transporter 5">
    <location>
        <begin position="1"/>
        <end position="569"/>
    </location>
</feature>
<feature type="topological domain" description="Cytoplasmic" evidence="1">
    <location>
        <begin position="1"/>
        <end position="67"/>
    </location>
</feature>
<feature type="transmembrane region" description="Helical" evidence="1">
    <location>
        <begin position="68"/>
        <end position="88"/>
    </location>
</feature>
<feature type="topological domain" description="Extracellular" evidence="1">
    <location>
        <begin position="89"/>
        <end position="97"/>
    </location>
</feature>
<feature type="transmembrane region" description="Helical" evidence="1">
    <location>
        <begin position="98"/>
        <end position="118"/>
    </location>
</feature>
<feature type="topological domain" description="Cytoplasmic" evidence="1">
    <location>
        <begin position="119"/>
        <end position="143"/>
    </location>
</feature>
<feature type="transmembrane region" description="Helical" evidence="1">
    <location>
        <begin position="144"/>
        <end position="164"/>
    </location>
</feature>
<feature type="topological domain" description="Extracellular" evidence="1">
    <location>
        <begin position="165"/>
        <end position="192"/>
    </location>
</feature>
<feature type="transmembrane region" description="Helical" evidence="1">
    <location>
        <begin position="193"/>
        <end position="213"/>
    </location>
</feature>
<feature type="topological domain" description="Cytoplasmic" evidence="1">
    <location>
        <begin position="214"/>
        <end position="222"/>
    </location>
</feature>
<feature type="transmembrane region" description="Helical" evidence="1">
    <location>
        <begin position="223"/>
        <end position="243"/>
    </location>
</feature>
<feature type="topological domain" description="Extracellular" evidence="1">
    <location>
        <begin position="244"/>
        <end position="251"/>
    </location>
</feature>
<feature type="transmembrane region" description="Helical" evidence="1">
    <location>
        <begin position="252"/>
        <end position="272"/>
    </location>
</feature>
<feature type="topological domain" description="Cytoplasmic" evidence="1">
    <location>
        <begin position="273"/>
        <end position="290"/>
    </location>
</feature>
<feature type="transmembrane region" description="Helical" evidence="1">
    <location>
        <begin position="291"/>
        <end position="311"/>
    </location>
</feature>
<feature type="topological domain" description="Extracellular" evidence="1">
    <location>
        <begin position="312"/>
        <end position="341"/>
    </location>
</feature>
<feature type="transmembrane region" description="Helical" evidence="1">
    <location>
        <begin position="342"/>
        <end position="362"/>
    </location>
</feature>
<feature type="topological domain" description="Cytoplasmic" evidence="1">
    <location>
        <begin position="363"/>
        <end position="389"/>
    </location>
</feature>
<feature type="transmembrane region" description="Helical" evidence="1">
    <location>
        <begin position="390"/>
        <end position="410"/>
    </location>
</feature>
<feature type="topological domain" description="Extracellular" evidence="1">
    <location>
        <position position="411"/>
    </location>
</feature>
<feature type="transmembrane region" description="Helical" evidence="1">
    <location>
        <begin position="412"/>
        <end position="432"/>
    </location>
</feature>
<feature type="topological domain" description="Cytoplasmic" evidence="1">
    <location>
        <begin position="433"/>
        <end position="450"/>
    </location>
</feature>
<feature type="transmembrane region" description="Helical" evidence="1">
    <location>
        <begin position="451"/>
        <end position="471"/>
    </location>
</feature>
<feature type="topological domain" description="Extracellular" evidence="1">
    <location>
        <begin position="472"/>
        <end position="477"/>
    </location>
</feature>
<feature type="transmembrane region" description="Helical" evidence="1">
    <location>
        <begin position="478"/>
        <end position="498"/>
    </location>
</feature>
<feature type="topological domain" description="Cytoplasmic" evidence="1">
    <location>
        <begin position="499"/>
        <end position="505"/>
    </location>
</feature>
<feature type="transmembrane region" description="Helical" evidence="1">
    <location>
        <begin position="506"/>
        <end position="526"/>
    </location>
</feature>
<feature type="topological domain" description="Extracellular" evidence="1">
    <location>
        <begin position="527"/>
        <end position="537"/>
    </location>
</feature>
<feature type="transmembrane region" description="Helical" evidence="1">
    <location>
        <begin position="538"/>
        <end position="558"/>
    </location>
</feature>
<feature type="topological domain" description="Cytoplasmic" evidence="1">
    <location>
        <begin position="559"/>
        <end position="569"/>
    </location>
</feature>
<accession>O64759</accession>
<accession>Q8RX58</accession>
<proteinExistence type="evidence at protein level"/>
<protein>
    <recommendedName>
        <fullName>Cationic amino acid transporter 5</fullName>
    </recommendedName>
</protein>
<reference key="1">
    <citation type="journal article" date="1999" name="Nature">
        <title>Sequence and analysis of chromosome 2 of the plant Arabidopsis thaliana.</title>
        <authorList>
            <person name="Lin X."/>
            <person name="Kaul S."/>
            <person name="Rounsley S.D."/>
            <person name="Shea T.P."/>
            <person name="Benito M.-I."/>
            <person name="Town C.D."/>
            <person name="Fujii C.Y."/>
            <person name="Mason T.M."/>
            <person name="Bowman C.L."/>
            <person name="Barnstead M.E."/>
            <person name="Feldblyum T.V."/>
            <person name="Buell C.R."/>
            <person name="Ketchum K.A."/>
            <person name="Lee J.J."/>
            <person name="Ronning C.M."/>
            <person name="Koo H.L."/>
            <person name="Moffat K.S."/>
            <person name="Cronin L.A."/>
            <person name="Shen M."/>
            <person name="Pai G."/>
            <person name="Van Aken S."/>
            <person name="Umayam L."/>
            <person name="Tallon L.J."/>
            <person name="Gill J.E."/>
            <person name="Adams M.D."/>
            <person name="Carrera A.J."/>
            <person name="Creasy T.H."/>
            <person name="Goodman H.M."/>
            <person name="Somerville C.R."/>
            <person name="Copenhaver G.P."/>
            <person name="Preuss D."/>
            <person name="Nierman W.C."/>
            <person name="White O."/>
            <person name="Eisen J.A."/>
            <person name="Salzberg S.L."/>
            <person name="Fraser C.M."/>
            <person name="Venter J.C."/>
        </authorList>
    </citation>
    <scope>NUCLEOTIDE SEQUENCE [LARGE SCALE GENOMIC DNA]</scope>
    <source>
        <strain>cv. Columbia</strain>
    </source>
</reference>
<reference key="2">
    <citation type="journal article" date="2017" name="Plant J.">
        <title>Araport11: a complete reannotation of the Arabidopsis thaliana reference genome.</title>
        <authorList>
            <person name="Cheng C.Y."/>
            <person name="Krishnakumar V."/>
            <person name="Chan A.P."/>
            <person name="Thibaud-Nissen F."/>
            <person name="Schobel S."/>
            <person name="Town C.D."/>
        </authorList>
    </citation>
    <scope>GENOME REANNOTATION</scope>
    <source>
        <strain>cv. Columbia</strain>
    </source>
</reference>
<reference key="3">
    <citation type="journal article" date="2003" name="Science">
        <title>Empirical analysis of transcriptional activity in the Arabidopsis genome.</title>
        <authorList>
            <person name="Yamada K."/>
            <person name="Lim J."/>
            <person name="Dale J.M."/>
            <person name="Chen H."/>
            <person name="Shinn P."/>
            <person name="Palm C.J."/>
            <person name="Southwick A.M."/>
            <person name="Wu H.C."/>
            <person name="Kim C.J."/>
            <person name="Nguyen M."/>
            <person name="Pham P.K."/>
            <person name="Cheuk R.F."/>
            <person name="Karlin-Newmann G."/>
            <person name="Liu S.X."/>
            <person name="Lam B."/>
            <person name="Sakano H."/>
            <person name="Wu T."/>
            <person name="Yu G."/>
            <person name="Miranda M."/>
            <person name="Quach H.L."/>
            <person name="Tripp M."/>
            <person name="Chang C.H."/>
            <person name="Lee J.M."/>
            <person name="Toriumi M.J."/>
            <person name="Chan M.M."/>
            <person name="Tang C.C."/>
            <person name="Onodera C.S."/>
            <person name="Deng J.M."/>
            <person name="Akiyama K."/>
            <person name="Ansari Y."/>
            <person name="Arakawa T."/>
            <person name="Banh J."/>
            <person name="Banno F."/>
            <person name="Bowser L."/>
            <person name="Brooks S.Y."/>
            <person name="Carninci P."/>
            <person name="Chao Q."/>
            <person name="Choy N."/>
            <person name="Enju A."/>
            <person name="Goldsmith A.D."/>
            <person name="Gurjal M."/>
            <person name="Hansen N.F."/>
            <person name="Hayashizaki Y."/>
            <person name="Johnson-Hopson C."/>
            <person name="Hsuan V.W."/>
            <person name="Iida K."/>
            <person name="Karnes M."/>
            <person name="Khan S."/>
            <person name="Koesema E."/>
            <person name="Ishida J."/>
            <person name="Jiang P.X."/>
            <person name="Jones T."/>
            <person name="Kawai J."/>
            <person name="Kamiya A."/>
            <person name="Meyers C."/>
            <person name="Nakajima M."/>
            <person name="Narusaka M."/>
            <person name="Seki M."/>
            <person name="Sakurai T."/>
            <person name="Satou M."/>
            <person name="Tamse R."/>
            <person name="Vaysberg M."/>
            <person name="Wallender E.K."/>
            <person name="Wong C."/>
            <person name="Yamamura Y."/>
            <person name="Yuan S."/>
            <person name="Shinozaki K."/>
            <person name="Davis R.W."/>
            <person name="Theologis A."/>
            <person name="Ecker J.R."/>
        </authorList>
    </citation>
    <scope>NUCLEOTIDE SEQUENCE [LARGE SCALE MRNA]</scope>
    <source>
        <strain>cv. Columbia</strain>
    </source>
</reference>
<reference key="4">
    <citation type="journal article" date="2004" name="Plant Physiol.">
        <title>Molecular and functional characterization of a family of amino acid transporters from Arabidopsis.</title>
        <authorList>
            <person name="Su Y.-H."/>
            <person name="Frommer W.B."/>
            <person name="Ludewig U."/>
        </authorList>
    </citation>
    <scope>FUNCTION</scope>
    <scope>BIOPHYSICOCHEMICAL PROPERTIES</scope>
    <scope>SUBCELLULAR LOCATION</scope>
    <scope>TISSUE SPECIFICITY</scope>
    <scope>GENE FAMILY</scope>
    <scope>NOMENCLATURE</scope>
    <source>
        <strain>cv. Columbia</strain>
    </source>
</reference>
<dbReference type="EMBL" id="AC004238">
    <property type="protein sequence ID" value="AAC12835.1"/>
    <property type="molecule type" value="Genomic_DNA"/>
</dbReference>
<dbReference type="EMBL" id="CP002685">
    <property type="protein sequence ID" value="AEC09043.1"/>
    <property type="molecule type" value="Genomic_DNA"/>
</dbReference>
<dbReference type="EMBL" id="AY090448">
    <property type="protein sequence ID" value="AAL91292.1"/>
    <property type="status" value="ALT_FRAME"/>
    <property type="molecule type" value="mRNA"/>
</dbReference>
<dbReference type="EMBL" id="BT000623">
    <property type="protein sequence ID" value="AAN18189.1"/>
    <property type="status" value="ALT_FRAME"/>
    <property type="molecule type" value="mRNA"/>
</dbReference>
<dbReference type="PIR" id="T00477">
    <property type="entry name" value="T00477"/>
</dbReference>
<dbReference type="RefSeq" id="NP_181041.1">
    <property type="nucleotide sequence ID" value="NM_129048.3"/>
</dbReference>
<dbReference type="SMR" id="O64759"/>
<dbReference type="BioGRID" id="3406">
    <property type="interactions" value="1"/>
</dbReference>
<dbReference type="FunCoup" id="O64759">
    <property type="interactions" value="41"/>
</dbReference>
<dbReference type="IntAct" id="O64759">
    <property type="interactions" value="1"/>
</dbReference>
<dbReference type="STRING" id="3702.O64759"/>
<dbReference type="TCDB" id="2.A.3.3.12">
    <property type="family name" value="the amino acid-polyamine-organocation (apc) family"/>
</dbReference>
<dbReference type="PaxDb" id="3702-AT2G34960.1"/>
<dbReference type="ProteomicsDB" id="240538"/>
<dbReference type="EnsemblPlants" id="AT2G34960.1">
    <property type="protein sequence ID" value="AT2G34960.1"/>
    <property type="gene ID" value="AT2G34960"/>
</dbReference>
<dbReference type="GeneID" id="818060"/>
<dbReference type="Gramene" id="AT2G34960.1">
    <property type="protein sequence ID" value="AT2G34960.1"/>
    <property type="gene ID" value="AT2G34960"/>
</dbReference>
<dbReference type="KEGG" id="ath:AT2G34960"/>
<dbReference type="Araport" id="AT2G34960"/>
<dbReference type="TAIR" id="AT2G34960">
    <property type="gene designation" value="CAT5"/>
</dbReference>
<dbReference type="eggNOG" id="KOG1286">
    <property type="taxonomic scope" value="Eukaryota"/>
</dbReference>
<dbReference type="HOGENOM" id="CLU_007946_15_9_1"/>
<dbReference type="InParanoid" id="O64759"/>
<dbReference type="OMA" id="RVGMKWA"/>
<dbReference type="OrthoDB" id="3900342at2759"/>
<dbReference type="PhylomeDB" id="O64759"/>
<dbReference type="PRO" id="PR:O64759"/>
<dbReference type="Proteomes" id="UP000006548">
    <property type="component" value="Chromosome 2"/>
</dbReference>
<dbReference type="ExpressionAtlas" id="O64759">
    <property type="expression patterns" value="baseline and differential"/>
</dbReference>
<dbReference type="GO" id="GO:0005886">
    <property type="term" value="C:plasma membrane"/>
    <property type="evidence" value="ECO:0000314"/>
    <property type="project" value="TAIR"/>
</dbReference>
<dbReference type="GO" id="GO:0022857">
    <property type="term" value="F:transmembrane transporter activity"/>
    <property type="evidence" value="ECO:0007669"/>
    <property type="project" value="InterPro"/>
</dbReference>
<dbReference type="GO" id="GO:0006865">
    <property type="term" value="P:amino acid transport"/>
    <property type="evidence" value="ECO:0007669"/>
    <property type="project" value="UniProtKB-KW"/>
</dbReference>
<dbReference type="FunFam" id="1.20.1740.10:FF:000035">
    <property type="entry name" value="Cationic amino acid transporter 5"/>
    <property type="match status" value="1"/>
</dbReference>
<dbReference type="Gene3D" id="1.20.1740.10">
    <property type="entry name" value="Amino acid/polyamine transporter I"/>
    <property type="match status" value="1"/>
</dbReference>
<dbReference type="InterPro" id="IPR002293">
    <property type="entry name" value="AA/rel_permease1"/>
</dbReference>
<dbReference type="InterPro" id="IPR029485">
    <property type="entry name" value="CAT_C"/>
</dbReference>
<dbReference type="PANTHER" id="PTHR43243:SF22">
    <property type="entry name" value="CATIONIC AMINO ACID TRANSPORTER 5"/>
    <property type="match status" value="1"/>
</dbReference>
<dbReference type="PANTHER" id="PTHR43243">
    <property type="entry name" value="INNER MEMBRANE TRANSPORTER YGJI-RELATED"/>
    <property type="match status" value="1"/>
</dbReference>
<dbReference type="Pfam" id="PF13520">
    <property type="entry name" value="AA_permease_2"/>
    <property type="match status" value="1"/>
</dbReference>
<dbReference type="Pfam" id="PF13906">
    <property type="entry name" value="AA_permease_C"/>
    <property type="match status" value="1"/>
</dbReference>
<organism>
    <name type="scientific">Arabidopsis thaliana</name>
    <name type="common">Mouse-ear cress</name>
    <dbReference type="NCBI Taxonomy" id="3702"/>
    <lineage>
        <taxon>Eukaryota</taxon>
        <taxon>Viridiplantae</taxon>
        <taxon>Streptophyta</taxon>
        <taxon>Embryophyta</taxon>
        <taxon>Tracheophyta</taxon>
        <taxon>Spermatophyta</taxon>
        <taxon>Magnoliopsida</taxon>
        <taxon>eudicotyledons</taxon>
        <taxon>Gunneridae</taxon>
        <taxon>Pentapetalae</taxon>
        <taxon>rosids</taxon>
        <taxon>malvids</taxon>
        <taxon>Brassicales</taxon>
        <taxon>Brassicaceae</taxon>
        <taxon>Camelineae</taxon>
        <taxon>Arabidopsis</taxon>
    </lineage>
</organism>